<sequence>MLEARDVVCIRDEHVLFSALSFTASSGEMVQIAGANGVGKTSLLRMLSGLATPESGDVCWQGQRINRIREHFNQQLLWLGHQPGIKSVLTGEENLRFFYPQQHQDAHWQALAAVGLAGYEDVPVARLSAGQQRRVALARLWLTDVPLWILDEPLTALDVAGVEMLTQRMEHHIAHGGIIILTTHQPLRPFAQSIRCIQLTPSEGTP</sequence>
<evidence type="ECO:0000255" key="1">
    <source>
        <dbReference type="HAMAP-Rule" id="MF_01707"/>
    </source>
</evidence>
<organism>
    <name type="scientific">Pectobacterium atrosepticum (strain SCRI 1043 / ATCC BAA-672)</name>
    <name type="common">Erwinia carotovora subsp. atroseptica</name>
    <dbReference type="NCBI Taxonomy" id="218491"/>
    <lineage>
        <taxon>Bacteria</taxon>
        <taxon>Pseudomonadati</taxon>
        <taxon>Pseudomonadota</taxon>
        <taxon>Gammaproteobacteria</taxon>
        <taxon>Enterobacterales</taxon>
        <taxon>Pectobacteriaceae</taxon>
        <taxon>Pectobacterium</taxon>
    </lineage>
</organism>
<name>CCMA_PECAS</name>
<keyword id="KW-0067">ATP-binding</keyword>
<keyword id="KW-0997">Cell inner membrane</keyword>
<keyword id="KW-1003">Cell membrane</keyword>
<keyword id="KW-0201">Cytochrome c-type biogenesis</keyword>
<keyword id="KW-0472">Membrane</keyword>
<keyword id="KW-0547">Nucleotide-binding</keyword>
<keyword id="KW-1185">Reference proteome</keyword>
<keyword id="KW-1278">Translocase</keyword>
<keyword id="KW-0813">Transport</keyword>
<accession>Q6D606</accession>
<reference key="1">
    <citation type="journal article" date="2004" name="Proc. Natl. Acad. Sci. U.S.A.">
        <title>Genome sequence of the enterobacterial phytopathogen Erwinia carotovora subsp. atroseptica and characterization of virulence factors.</title>
        <authorList>
            <person name="Bell K.S."/>
            <person name="Sebaihia M."/>
            <person name="Pritchard L."/>
            <person name="Holden M.T.G."/>
            <person name="Hyman L.J."/>
            <person name="Holeva M.C."/>
            <person name="Thomson N.R."/>
            <person name="Bentley S.D."/>
            <person name="Churcher L.J.C."/>
            <person name="Mungall K."/>
            <person name="Atkin R."/>
            <person name="Bason N."/>
            <person name="Brooks K."/>
            <person name="Chillingworth T."/>
            <person name="Clark K."/>
            <person name="Doggett J."/>
            <person name="Fraser A."/>
            <person name="Hance Z."/>
            <person name="Hauser H."/>
            <person name="Jagels K."/>
            <person name="Moule S."/>
            <person name="Norbertczak H."/>
            <person name="Ormond D."/>
            <person name="Price C."/>
            <person name="Quail M.A."/>
            <person name="Sanders M."/>
            <person name="Walker D."/>
            <person name="Whitehead S."/>
            <person name="Salmond G.P.C."/>
            <person name="Birch P.R.J."/>
            <person name="Parkhill J."/>
            <person name="Toth I.K."/>
        </authorList>
    </citation>
    <scope>NUCLEOTIDE SEQUENCE [LARGE SCALE GENOMIC DNA]</scope>
    <source>
        <strain>SCRI 1043 / ATCC BAA-672</strain>
    </source>
</reference>
<comment type="function">
    <text evidence="1">Part of the ABC transporter complex CcmAB involved in the biogenesis of c-type cytochromes; once thought to export heme, this seems not to be the case, but its exact role is uncertain. Responsible for energy coupling to the transport system.</text>
</comment>
<comment type="catalytic activity">
    <reaction evidence="1">
        <text>heme b(in) + ATP + H2O = heme b(out) + ADP + phosphate + H(+)</text>
        <dbReference type="Rhea" id="RHEA:19261"/>
        <dbReference type="ChEBI" id="CHEBI:15377"/>
        <dbReference type="ChEBI" id="CHEBI:15378"/>
        <dbReference type="ChEBI" id="CHEBI:30616"/>
        <dbReference type="ChEBI" id="CHEBI:43474"/>
        <dbReference type="ChEBI" id="CHEBI:60344"/>
        <dbReference type="ChEBI" id="CHEBI:456216"/>
        <dbReference type="EC" id="7.6.2.5"/>
    </reaction>
</comment>
<comment type="subunit">
    <text evidence="1">The complex is composed of two ATP-binding proteins (CcmA) and two transmembrane proteins (CcmB).</text>
</comment>
<comment type="subcellular location">
    <subcellularLocation>
        <location evidence="1">Cell inner membrane</location>
        <topology evidence="1">Peripheral membrane protein</topology>
    </subcellularLocation>
</comment>
<comment type="similarity">
    <text evidence="1">Belongs to the ABC transporter superfamily. CcmA exporter (TC 3.A.1.107) family.</text>
</comment>
<gene>
    <name evidence="1" type="primary">ccmA</name>
    <name type="ordered locus">ECA1882</name>
</gene>
<dbReference type="EC" id="7.6.2.5" evidence="1"/>
<dbReference type="EMBL" id="BX950851">
    <property type="protein sequence ID" value="CAG74785.1"/>
    <property type="molecule type" value="Genomic_DNA"/>
</dbReference>
<dbReference type="RefSeq" id="WP_011093451.1">
    <property type="nucleotide sequence ID" value="NC_004547.2"/>
</dbReference>
<dbReference type="SMR" id="Q6D606"/>
<dbReference type="STRING" id="218491.ECA1882"/>
<dbReference type="KEGG" id="eca:ECA1882"/>
<dbReference type="PATRIC" id="fig|218491.5.peg.1912"/>
<dbReference type="eggNOG" id="COG4133">
    <property type="taxonomic scope" value="Bacteria"/>
</dbReference>
<dbReference type="HOGENOM" id="CLU_000604_1_2_6"/>
<dbReference type="OrthoDB" id="9800654at2"/>
<dbReference type="Proteomes" id="UP000007966">
    <property type="component" value="Chromosome"/>
</dbReference>
<dbReference type="GO" id="GO:0005886">
    <property type="term" value="C:plasma membrane"/>
    <property type="evidence" value="ECO:0007669"/>
    <property type="project" value="UniProtKB-SubCell"/>
</dbReference>
<dbReference type="GO" id="GO:0015439">
    <property type="term" value="F:ABC-type heme transporter activity"/>
    <property type="evidence" value="ECO:0007669"/>
    <property type="project" value="UniProtKB-EC"/>
</dbReference>
<dbReference type="GO" id="GO:0005524">
    <property type="term" value="F:ATP binding"/>
    <property type="evidence" value="ECO:0007669"/>
    <property type="project" value="UniProtKB-KW"/>
</dbReference>
<dbReference type="GO" id="GO:0016887">
    <property type="term" value="F:ATP hydrolysis activity"/>
    <property type="evidence" value="ECO:0007669"/>
    <property type="project" value="InterPro"/>
</dbReference>
<dbReference type="GO" id="GO:0017004">
    <property type="term" value="P:cytochrome complex assembly"/>
    <property type="evidence" value="ECO:0007669"/>
    <property type="project" value="UniProtKB-KW"/>
</dbReference>
<dbReference type="CDD" id="cd03231">
    <property type="entry name" value="ABC_CcmA_heme_exporter"/>
    <property type="match status" value="1"/>
</dbReference>
<dbReference type="Gene3D" id="3.40.50.300">
    <property type="entry name" value="P-loop containing nucleotide triphosphate hydrolases"/>
    <property type="match status" value="1"/>
</dbReference>
<dbReference type="InterPro" id="IPR003593">
    <property type="entry name" value="AAA+_ATPase"/>
</dbReference>
<dbReference type="InterPro" id="IPR003439">
    <property type="entry name" value="ABC_transporter-like_ATP-bd"/>
</dbReference>
<dbReference type="InterPro" id="IPR017871">
    <property type="entry name" value="ABC_transporter-like_CS"/>
</dbReference>
<dbReference type="InterPro" id="IPR005895">
    <property type="entry name" value="ABC_transptr_haem_export_CcmA"/>
</dbReference>
<dbReference type="InterPro" id="IPR027417">
    <property type="entry name" value="P-loop_NTPase"/>
</dbReference>
<dbReference type="NCBIfam" id="TIGR01189">
    <property type="entry name" value="ccmA"/>
    <property type="match status" value="1"/>
</dbReference>
<dbReference type="NCBIfam" id="NF010061">
    <property type="entry name" value="PRK13538.1"/>
    <property type="match status" value="1"/>
</dbReference>
<dbReference type="PANTHER" id="PTHR43499">
    <property type="entry name" value="ABC TRANSPORTER I FAMILY MEMBER 1"/>
    <property type="match status" value="1"/>
</dbReference>
<dbReference type="PANTHER" id="PTHR43499:SF1">
    <property type="entry name" value="ABC TRANSPORTER I FAMILY MEMBER 1"/>
    <property type="match status" value="1"/>
</dbReference>
<dbReference type="Pfam" id="PF00005">
    <property type="entry name" value="ABC_tran"/>
    <property type="match status" value="1"/>
</dbReference>
<dbReference type="SMART" id="SM00382">
    <property type="entry name" value="AAA"/>
    <property type="match status" value="1"/>
</dbReference>
<dbReference type="SUPFAM" id="SSF52540">
    <property type="entry name" value="P-loop containing nucleoside triphosphate hydrolases"/>
    <property type="match status" value="1"/>
</dbReference>
<dbReference type="PROSITE" id="PS00211">
    <property type="entry name" value="ABC_TRANSPORTER_1"/>
    <property type="match status" value="1"/>
</dbReference>
<dbReference type="PROSITE" id="PS50893">
    <property type="entry name" value="ABC_TRANSPORTER_2"/>
    <property type="match status" value="1"/>
</dbReference>
<dbReference type="PROSITE" id="PS51243">
    <property type="entry name" value="CCMA"/>
    <property type="match status" value="1"/>
</dbReference>
<protein>
    <recommendedName>
        <fullName evidence="1">Cytochrome c biogenesis ATP-binding export protein CcmA</fullName>
        <ecNumber evidence="1">7.6.2.5</ecNumber>
    </recommendedName>
    <alternativeName>
        <fullName evidence="1">Heme exporter protein A</fullName>
    </alternativeName>
</protein>
<proteinExistence type="inferred from homology"/>
<feature type="chain" id="PRO_0000092180" description="Cytochrome c biogenesis ATP-binding export protein CcmA">
    <location>
        <begin position="1"/>
        <end position="206"/>
    </location>
</feature>
<feature type="domain" description="ABC transporter" evidence="1">
    <location>
        <begin position="2"/>
        <end position="206"/>
    </location>
</feature>
<feature type="binding site" evidence="1">
    <location>
        <begin position="34"/>
        <end position="41"/>
    </location>
    <ligand>
        <name>ATP</name>
        <dbReference type="ChEBI" id="CHEBI:30616"/>
    </ligand>
</feature>